<evidence type="ECO:0000250" key="1"/>
<evidence type="ECO:0000255" key="2"/>
<evidence type="ECO:0000256" key="3">
    <source>
        <dbReference type="SAM" id="MobiDB-lite"/>
    </source>
</evidence>
<evidence type="ECO:0000305" key="4"/>
<organism>
    <name type="scientific">Zygosaccharomyces rouxii (strain ATCC 2623 / CBS 732 / NBRC 1130 / NCYC 568 / NRRL Y-229)</name>
    <dbReference type="NCBI Taxonomy" id="559307"/>
    <lineage>
        <taxon>Eukaryota</taxon>
        <taxon>Fungi</taxon>
        <taxon>Dikarya</taxon>
        <taxon>Ascomycota</taxon>
        <taxon>Saccharomycotina</taxon>
        <taxon>Saccharomycetes</taxon>
        <taxon>Saccharomycetales</taxon>
        <taxon>Saccharomycetaceae</taxon>
        <taxon>Zygosaccharomyces</taxon>
    </lineage>
</organism>
<sequence length="349" mass="40101">MPIIDFEIWKLWLFRSIKAIVIIFLVGFSIVLPVDSIVQAAESSNTALNTFIVVGALVAFGLVSIIIIVGRIIFCRSCIQDIPRRYLPITPNDLPHRGSRKMIMENMEKSKELSILFKKPKEPVIHAGLEPPSRCDDPRYEKLFPDYLNYRSCIKSLSDRLKYQGIFLNNMNIDMKLGETFADVVSNQFTRNTRNKTQIDNSKKFIDLYETIRYSGREVTRQQFIDFVSLAIYFVEVSLTRDDRSPALGELNTGSQLQFNFDNGTWENDVSNYSFPNDAYSNGADYYYPESINYLKRTNSTSTVARKVPSFVPTNPEEEHKMALDPQDPVSHKPSMHTLADSFKYVTHR</sequence>
<gene>
    <name type="primary">DLT1</name>
    <name type="ordered locus">ZYRO0A08954g</name>
</gene>
<dbReference type="EMBL" id="CU928173">
    <property type="protein sequence ID" value="CAR25824.1"/>
    <property type="molecule type" value="Genomic_DNA"/>
</dbReference>
<dbReference type="RefSeq" id="XP_002494757.1">
    <property type="nucleotide sequence ID" value="XM_002494712.1"/>
</dbReference>
<dbReference type="FunCoup" id="C5DQ63">
    <property type="interactions" value="24"/>
</dbReference>
<dbReference type="STRING" id="559307.C5DQ63"/>
<dbReference type="GeneID" id="8201521"/>
<dbReference type="KEGG" id="zro:ZYRO0A08954g"/>
<dbReference type="HOGENOM" id="CLU_066044_0_0_1"/>
<dbReference type="InParanoid" id="C5DQ63"/>
<dbReference type="Proteomes" id="UP000008536">
    <property type="component" value="Chromosome A"/>
</dbReference>
<dbReference type="GO" id="GO:0016020">
    <property type="term" value="C:membrane"/>
    <property type="evidence" value="ECO:0007669"/>
    <property type="project" value="UniProtKB-SubCell"/>
</dbReference>
<dbReference type="InterPro" id="IPR038869">
    <property type="entry name" value="DLT1"/>
</dbReference>
<dbReference type="PANTHER" id="PTHR40021">
    <property type="entry name" value="DEFECT AT LOW TEMPERATURE PROTEIN 1"/>
    <property type="match status" value="1"/>
</dbReference>
<dbReference type="PANTHER" id="PTHR40021:SF1">
    <property type="entry name" value="DEFECT AT LOW TEMPERATURE PROTEIN 1"/>
    <property type="match status" value="1"/>
</dbReference>
<accession>C5DQ63</accession>
<comment type="function">
    <text evidence="1">Required for growth under high-pressure and low-temperature conditions.</text>
</comment>
<comment type="subcellular location">
    <subcellularLocation>
        <location evidence="4">Membrane</location>
        <topology evidence="4">Multi-pass membrane protein</topology>
    </subcellularLocation>
</comment>
<comment type="similarity">
    <text evidence="4">Belongs to the DLT1 family.</text>
</comment>
<proteinExistence type="inferred from homology"/>
<feature type="chain" id="PRO_0000399028" description="Defect at low temperature protein 1">
    <location>
        <begin position="1"/>
        <end position="349"/>
    </location>
</feature>
<feature type="topological domain" description="Cytoplasmic" evidence="2">
    <location>
        <begin position="1"/>
        <end position="18"/>
    </location>
</feature>
<feature type="transmembrane region" description="Helical" evidence="2">
    <location>
        <begin position="19"/>
        <end position="39"/>
    </location>
</feature>
<feature type="topological domain" description="Extracellular" evidence="2">
    <location>
        <begin position="40"/>
        <end position="49"/>
    </location>
</feature>
<feature type="transmembrane region" description="Helical" evidence="2">
    <location>
        <begin position="50"/>
        <end position="70"/>
    </location>
</feature>
<feature type="topological domain" description="Cytoplasmic" evidence="2">
    <location>
        <begin position="71"/>
        <end position="349"/>
    </location>
</feature>
<feature type="region of interest" description="Disordered" evidence="3">
    <location>
        <begin position="312"/>
        <end position="333"/>
    </location>
</feature>
<name>DLT1_ZYGRC</name>
<protein>
    <recommendedName>
        <fullName>Defect at low temperature protein 1</fullName>
    </recommendedName>
</protein>
<reference key="1">
    <citation type="journal article" date="2009" name="Genome Res.">
        <title>Comparative genomics of protoploid Saccharomycetaceae.</title>
        <authorList>
            <consortium name="The Genolevures Consortium"/>
            <person name="Souciet J.-L."/>
            <person name="Dujon B."/>
            <person name="Gaillardin C."/>
            <person name="Johnston M."/>
            <person name="Baret P.V."/>
            <person name="Cliften P."/>
            <person name="Sherman D.J."/>
            <person name="Weissenbach J."/>
            <person name="Westhof E."/>
            <person name="Wincker P."/>
            <person name="Jubin C."/>
            <person name="Poulain J."/>
            <person name="Barbe V."/>
            <person name="Segurens B."/>
            <person name="Artiguenave F."/>
            <person name="Anthouard V."/>
            <person name="Vacherie B."/>
            <person name="Val M.-E."/>
            <person name="Fulton R.S."/>
            <person name="Minx P."/>
            <person name="Wilson R."/>
            <person name="Durrens P."/>
            <person name="Jean G."/>
            <person name="Marck C."/>
            <person name="Martin T."/>
            <person name="Nikolski M."/>
            <person name="Rolland T."/>
            <person name="Seret M.-L."/>
            <person name="Casaregola S."/>
            <person name="Despons L."/>
            <person name="Fairhead C."/>
            <person name="Fischer G."/>
            <person name="Lafontaine I."/>
            <person name="Leh V."/>
            <person name="Lemaire M."/>
            <person name="de Montigny J."/>
            <person name="Neuveglise C."/>
            <person name="Thierry A."/>
            <person name="Blanc-Lenfle I."/>
            <person name="Bleykasten C."/>
            <person name="Diffels J."/>
            <person name="Fritsch E."/>
            <person name="Frangeul L."/>
            <person name="Goeffon A."/>
            <person name="Jauniaux N."/>
            <person name="Kachouri-Lafond R."/>
            <person name="Payen C."/>
            <person name="Potier S."/>
            <person name="Pribylova L."/>
            <person name="Ozanne C."/>
            <person name="Richard G.-F."/>
            <person name="Sacerdot C."/>
            <person name="Straub M.-L."/>
            <person name="Talla E."/>
        </authorList>
    </citation>
    <scope>NUCLEOTIDE SEQUENCE [LARGE SCALE GENOMIC DNA]</scope>
    <source>
        <strain>ATCC 2623 / CBS 732 / BCRC 21506 / NBRC 1130 / NCYC 568 / NRRL Y-229</strain>
    </source>
</reference>
<keyword id="KW-0472">Membrane</keyword>
<keyword id="KW-1185">Reference proteome</keyword>
<keyword id="KW-0812">Transmembrane</keyword>
<keyword id="KW-1133">Transmembrane helix</keyword>